<evidence type="ECO:0000255" key="1">
    <source>
        <dbReference type="HAMAP-Rule" id="MF_00692"/>
    </source>
</evidence>
<evidence type="ECO:0000305" key="2"/>
<dbReference type="EC" id="2.7.7.-" evidence="1"/>
<dbReference type="EC" id="2.7.7.108" evidence="1"/>
<dbReference type="EMBL" id="D10248">
    <property type="protein sequence ID" value="BAA01092.1"/>
    <property type="molecule type" value="Genomic_DNA"/>
</dbReference>
<dbReference type="EMBL" id="BA000016">
    <property type="protein sequence ID" value="BAB79741.1"/>
    <property type="molecule type" value="Genomic_DNA"/>
</dbReference>
<dbReference type="EMBL" id="X17300">
    <property type="protein sequence ID" value="CAA35187.1"/>
    <property type="molecule type" value="Genomic_DNA"/>
</dbReference>
<dbReference type="PIR" id="JQ0367">
    <property type="entry name" value="JQ0367"/>
</dbReference>
<dbReference type="RefSeq" id="WP_011009583.1">
    <property type="nucleotide sequence ID" value="NC_003366.1"/>
</dbReference>
<dbReference type="SMR" id="Q06373"/>
<dbReference type="KEGG" id="cpe:CPE0035"/>
<dbReference type="HOGENOM" id="CLU_010245_4_1_9"/>
<dbReference type="Proteomes" id="UP000000818">
    <property type="component" value="Chromosome"/>
</dbReference>
<dbReference type="GO" id="GO:0070733">
    <property type="term" value="F:AMPylase activity"/>
    <property type="evidence" value="ECO:0007669"/>
    <property type="project" value="RHEA"/>
</dbReference>
<dbReference type="GO" id="GO:0005524">
    <property type="term" value="F:ATP binding"/>
    <property type="evidence" value="ECO:0007669"/>
    <property type="project" value="UniProtKB-UniRule"/>
</dbReference>
<dbReference type="GO" id="GO:0000287">
    <property type="term" value="F:magnesium ion binding"/>
    <property type="evidence" value="ECO:0007669"/>
    <property type="project" value="UniProtKB-UniRule"/>
</dbReference>
<dbReference type="HAMAP" id="MF_00692">
    <property type="entry name" value="YdiU_SelO"/>
    <property type="match status" value="1"/>
</dbReference>
<dbReference type="InterPro" id="IPR003846">
    <property type="entry name" value="SelO"/>
</dbReference>
<dbReference type="NCBIfam" id="NF000658">
    <property type="entry name" value="PRK00029.1"/>
    <property type="match status" value="1"/>
</dbReference>
<dbReference type="PANTHER" id="PTHR12153:SF15">
    <property type="entry name" value="PROTEIN ADENYLYLTRANSFERASE SELO, MITOCHONDRIAL"/>
    <property type="match status" value="1"/>
</dbReference>
<dbReference type="PANTHER" id="PTHR12153">
    <property type="entry name" value="SELENOPROTEIN O"/>
    <property type="match status" value="1"/>
</dbReference>
<dbReference type="Pfam" id="PF02696">
    <property type="entry name" value="SelO"/>
    <property type="match status" value="1"/>
</dbReference>
<feature type="chain" id="PRO_0000121413" description="Protein nucleotidyltransferase YdiU">
    <location>
        <begin position="1"/>
        <end position="490"/>
    </location>
</feature>
<feature type="active site" description="Proton acceptor" evidence="1">
    <location>
        <position position="256"/>
    </location>
</feature>
<feature type="binding site" evidence="1">
    <location>
        <position position="94"/>
    </location>
    <ligand>
        <name>ATP</name>
        <dbReference type="ChEBI" id="CHEBI:30616"/>
    </ligand>
</feature>
<feature type="binding site" evidence="1">
    <location>
        <position position="96"/>
    </location>
    <ligand>
        <name>ATP</name>
        <dbReference type="ChEBI" id="CHEBI:30616"/>
    </ligand>
</feature>
<feature type="binding site" evidence="1">
    <location>
        <position position="97"/>
    </location>
    <ligand>
        <name>ATP</name>
        <dbReference type="ChEBI" id="CHEBI:30616"/>
    </ligand>
</feature>
<feature type="binding site" evidence="1">
    <location>
        <position position="117"/>
    </location>
    <ligand>
        <name>ATP</name>
        <dbReference type="ChEBI" id="CHEBI:30616"/>
    </ligand>
</feature>
<feature type="binding site" evidence="1">
    <location>
        <position position="129"/>
    </location>
    <ligand>
        <name>ATP</name>
        <dbReference type="ChEBI" id="CHEBI:30616"/>
    </ligand>
</feature>
<feature type="binding site" evidence="1">
    <location>
        <position position="130"/>
    </location>
    <ligand>
        <name>ATP</name>
        <dbReference type="ChEBI" id="CHEBI:30616"/>
    </ligand>
</feature>
<feature type="binding site" evidence="1">
    <location>
        <position position="180"/>
    </location>
    <ligand>
        <name>ATP</name>
        <dbReference type="ChEBI" id="CHEBI:30616"/>
    </ligand>
</feature>
<feature type="binding site" evidence="1">
    <location>
        <position position="187"/>
    </location>
    <ligand>
        <name>ATP</name>
        <dbReference type="ChEBI" id="CHEBI:30616"/>
    </ligand>
</feature>
<feature type="binding site" evidence="1">
    <location>
        <position position="257"/>
    </location>
    <ligand>
        <name>Mg(2+)</name>
        <dbReference type="ChEBI" id="CHEBI:18420"/>
    </ligand>
</feature>
<feature type="binding site" evidence="1">
    <location>
        <position position="266"/>
    </location>
    <ligand>
        <name>ATP</name>
        <dbReference type="ChEBI" id="CHEBI:30616"/>
    </ligand>
</feature>
<feature type="binding site" evidence="1">
    <location>
        <position position="266"/>
    </location>
    <ligand>
        <name>Mg(2+)</name>
        <dbReference type="ChEBI" id="CHEBI:18420"/>
    </ligand>
</feature>
<feature type="sequence variant" description="In strain: 8-6.">
    <original>E</original>
    <variation>K</variation>
    <location>
        <position position="48"/>
    </location>
</feature>
<feature type="sequence variant" description="In strain: 8-6.">
    <original>V</original>
    <variation>I</variation>
    <location>
        <position position="56"/>
    </location>
</feature>
<feature type="sequence variant" description="In strain: 8-6.">
    <original>V</original>
    <variation>T</variation>
    <location>
        <position position="76"/>
    </location>
</feature>
<feature type="sequence variant" description="In strain: 8-6 and NCIB 10662.">
    <original>C</original>
    <variation>G</variation>
    <location>
        <position position="109"/>
    </location>
</feature>
<feature type="sequence variant" description="In strain: 8-6.">
    <original>G</original>
    <variation>S</variation>
    <location>
        <position position="149"/>
    </location>
</feature>
<feature type="sequence variant" description="In strain: 8-6.">
    <original>R</original>
    <variation>K</variation>
    <location>
        <position position="171"/>
    </location>
</feature>
<feature type="sequence variant" description="In strain: NCIB 10662.">
    <original>E</original>
    <variation>D</variation>
    <location>
        <position position="201"/>
    </location>
</feature>
<feature type="sequence variant" description="In strain: NCIB 10662.">
    <original>DN</original>
    <variation>KS</variation>
    <location>
        <begin position="220"/>
        <end position="221"/>
    </location>
</feature>
<feature type="sequence variant" description="In strain: 8-6.">
    <original>D</original>
    <variation>N</variation>
    <location>
        <position position="220"/>
    </location>
</feature>
<feature type="sequence variant" description="In strain: 8-6.">
    <original>N</original>
    <variation>S</variation>
    <location>
        <position position="332"/>
    </location>
</feature>
<feature type="sequence variant" description="In strain: NCIB 10662.">
    <original>T</original>
    <variation>A</variation>
    <location>
        <position position="347"/>
    </location>
</feature>
<feature type="sequence variant" description="In strain: NCIB 10662.">
    <original>D</original>
    <variation>N</variation>
    <location>
        <position position="481"/>
    </location>
</feature>
<proteinExistence type="inferred from homology"/>
<keyword id="KW-0067">ATP-binding</keyword>
<keyword id="KW-0460">Magnesium</keyword>
<keyword id="KW-0464">Manganese</keyword>
<keyword id="KW-0479">Metal-binding</keyword>
<keyword id="KW-0547">Nucleotide-binding</keyword>
<keyword id="KW-0548">Nucleotidyltransferase</keyword>
<keyword id="KW-1185">Reference proteome</keyword>
<keyword id="KW-0808">Transferase</keyword>
<protein>
    <recommendedName>
        <fullName evidence="1">Protein nucleotidyltransferase YdiU</fullName>
        <ecNumber evidence="1">2.7.7.-</ecNumber>
    </recommendedName>
    <alternativeName>
        <fullName evidence="1">Protein adenylyltransferase YdiU</fullName>
        <ecNumber evidence="1">2.7.7.108</ecNumber>
    </alternativeName>
    <alternativeName>
        <fullName evidence="1">Protein uridylyltransferase YdiU</fullName>
        <ecNumber evidence="1">2.7.7.-</ecNumber>
    </alternativeName>
</protein>
<comment type="function">
    <text evidence="1">Nucleotidyltransferase involved in the post-translational modification of proteins. It can catalyze the addition of adenosine monophosphate (AMP) or uridine monophosphate (UMP) to a protein, resulting in modifications known as AMPylation and UMPylation.</text>
</comment>
<comment type="catalytic activity">
    <reaction evidence="1">
        <text>L-seryl-[protein] + ATP = 3-O-(5'-adenylyl)-L-seryl-[protein] + diphosphate</text>
        <dbReference type="Rhea" id="RHEA:58120"/>
        <dbReference type="Rhea" id="RHEA-COMP:9863"/>
        <dbReference type="Rhea" id="RHEA-COMP:15073"/>
        <dbReference type="ChEBI" id="CHEBI:29999"/>
        <dbReference type="ChEBI" id="CHEBI:30616"/>
        <dbReference type="ChEBI" id="CHEBI:33019"/>
        <dbReference type="ChEBI" id="CHEBI:142516"/>
        <dbReference type="EC" id="2.7.7.108"/>
    </reaction>
</comment>
<comment type="catalytic activity">
    <reaction evidence="1">
        <text>L-threonyl-[protein] + ATP = 3-O-(5'-adenylyl)-L-threonyl-[protein] + diphosphate</text>
        <dbReference type="Rhea" id="RHEA:54292"/>
        <dbReference type="Rhea" id="RHEA-COMP:11060"/>
        <dbReference type="Rhea" id="RHEA-COMP:13847"/>
        <dbReference type="ChEBI" id="CHEBI:30013"/>
        <dbReference type="ChEBI" id="CHEBI:30616"/>
        <dbReference type="ChEBI" id="CHEBI:33019"/>
        <dbReference type="ChEBI" id="CHEBI:138113"/>
        <dbReference type="EC" id="2.7.7.108"/>
    </reaction>
</comment>
<comment type="catalytic activity">
    <reaction evidence="1">
        <text>L-tyrosyl-[protein] + ATP = O-(5'-adenylyl)-L-tyrosyl-[protein] + diphosphate</text>
        <dbReference type="Rhea" id="RHEA:54288"/>
        <dbReference type="Rhea" id="RHEA-COMP:10136"/>
        <dbReference type="Rhea" id="RHEA-COMP:13846"/>
        <dbReference type="ChEBI" id="CHEBI:30616"/>
        <dbReference type="ChEBI" id="CHEBI:33019"/>
        <dbReference type="ChEBI" id="CHEBI:46858"/>
        <dbReference type="ChEBI" id="CHEBI:83624"/>
        <dbReference type="EC" id="2.7.7.108"/>
    </reaction>
</comment>
<comment type="catalytic activity">
    <reaction evidence="1">
        <text>L-histidyl-[protein] + UTP = N(tele)-(5'-uridylyl)-L-histidyl-[protein] + diphosphate</text>
        <dbReference type="Rhea" id="RHEA:83891"/>
        <dbReference type="Rhea" id="RHEA-COMP:9745"/>
        <dbReference type="Rhea" id="RHEA-COMP:20239"/>
        <dbReference type="ChEBI" id="CHEBI:29979"/>
        <dbReference type="ChEBI" id="CHEBI:33019"/>
        <dbReference type="ChEBI" id="CHEBI:46398"/>
        <dbReference type="ChEBI" id="CHEBI:233474"/>
    </reaction>
</comment>
<comment type="catalytic activity">
    <reaction evidence="1">
        <text>L-seryl-[protein] + UTP = O-(5'-uridylyl)-L-seryl-[protein] + diphosphate</text>
        <dbReference type="Rhea" id="RHEA:64604"/>
        <dbReference type="Rhea" id="RHEA-COMP:9863"/>
        <dbReference type="Rhea" id="RHEA-COMP:16635"/>
        <dbReference type="ChEBI" id="CHEBI:29999"/>
        <dbReference type="ChEBI" id="CHEBI:33019"/>
        <dbReference type="ChEBI" id="CHEBI:46398"/>
        <dbReference type="ChEBI" id="CHEBI:156051"/>
    </reaction>
</comment>
<comment type="catalytic activity">
    <reaction evidence="1">
        <text>L-tyrosyl-[protein] + UTP = O-(5'-uridylyl)-L-tyrosyl-[protein] + diphosphate</text>
        <dbReference type="Rhea" id="RHEA:83887"/>
        <dbReference type="Rhea" id="RHEA-COMP:10136"/>
        <dbReference type="Rhea" id="RHEA-COMP:20238"/>
        <dbReference type="ChEBI" id="CHEBI:33019"/>
        <dbReference type="ChEBI" id="CHEBI:46398"/>
        <dbReference type="ChEBI" id="CHEBI:46858"/>
        <dbReference type="ChEBI" id="CHEBI:90602"/>
    </reaction>
</comment>
<comment type="cofactor">
    <cofactor evidence="1">
        <name>Mg(2+)</name>
        <dbReference type="ChEBI" id="CHEBI:18420"/>
    </cofactor>
    <cofactor evidence="1">
        <name>Mn(2+)</name>
        <dbReference type="ChEBI" id="CHEBI:29035"/>
    </cofactor>
</comment>
<comment type="similarity">
    <text evidence="1 2">Belongs to the SELO family.</text>
</comment>
<reference key="1">
    <citation type="journal article" date="1993" name="Infect. Immun.">
        <title>Comparison of the alpha-toxin genes of Clostridium perfringens type A and C strains: evidence for extragenic regulation of transcription.</title>
        <authorList>
            <person name="Katayama S."/>
            <person name="Matsushita O."/>
            <person name="Minami J."/>
            <person name="Mizobuchi S."/>
            <person name="Okabe A."/>
        </authorList>
    </citation>
    <scope>NUCLEOTIDE SEQUENCE [GENOMIC DNA]</scope>
    <source>
        <strain>ATCC 3628 / NCIMB 10662 / Type C</strain>
    </source>
</reference>
<reference key="2">
    <citation type="journal article" date="2002" name="Proc. Natl. Acad. Sci. U.S.A.">
        <title>Complete genome sequence of Clostridium perfringens, an anaerobic flesh-eater.</title>
        <authorList>
            <person name="Shimizu T."/>
            <person name="Ohtani K."/>
            <person name="Hirakawa H."/>
            <person name="Ohshima K."/>
            <person name="Yamashita A."/>
            <person name="Shiba T."/>
            <person name="Ogasawara N."/>
            <person name="Hattori M."/>
            <person name="Kuhara S."/>
            <person name="Hayashi H."/>
        </authorList>
    </citation>
    <scope>NUCLEOTIDE SEQUENCE [LARGE SCALE GENOMIC DNA]</scope>
    <source>
        <strain>13 / Type A</strain>
    </source>
</reference>
<reference key="3">
    <citation type="journal article" date="1989" name="Mol. Gen. Genet.">
        <title>Gene cloning shows the alpha-toxin of Clostridium perfringens to contain both sphingomyelinase and lecithinase activities.</title>
        <authorList>
            <person name="Saint-Joanis B."/>
            <person name="Garnier T."/>
            <person name="Cole S.T."/>
        </authorList>
    </citation>
    <scope>NUCLEOTIDE SEQUENCE [GENOMIC DNA] OF 1-332</scope>
    <source>
        <strain>8-6 / Type A</strain>
    </source>
</reference>
<organism>
    <name type="scientific">Clostridium perfringens (strain 13 / Type A)</name>
    <dbReference type="NCBI Taxonomy" id="195102"/>
    <lineage>
        <taxon>Bacteria</taxon>
        <taxon>Bacillati</taxon>
        <taxon>Bacillota</taxon>
        <taxon>Clostridia</taxon>
        <taxon>Eubacteriales</taxon>
        <taxon>Clostridiaceae</taxon>
        <taxon>Clostridium</taxon>
    </lineage>
</organism>
<sequence>MDNKNFQSKTGFNLENTYLTLPNIFFSEQNPKGSKNPKLIKFNTSLAEELGLNEEVLNSDFGLNIFAGNETFPGIVPIAQAYAGHQFGHFTMLGDGRALLLGEHVTKDCKRYDVQLKGSGRTIYSRGGDGKAALAPMLREYIISEGMHGLGIPTTRSLAVVSTGEEVLRERFEQGAILTRIASSHIRVGTFAYAAQWGTLEDLKSLADYTIKRHFPNIADNENKYILFLEEVINRQAELIVKWQSVGFIHGVMNTDNMVISGETIDYGPCAFMDTYDTNTVFSSIDYAGRYAYGNQPNMALWNLARFSEALLPLLNPNLDEAVNIAKKSISNFSKLYKKYWFNKMRTKLGLFTEKENDELLIEGLLSTMQKYEADFTNTFVSLTLNKFEDEKVFSSDEFKTWYALWQNRLKEENRPQEEVRNLMMNNNPYIIPRNHLVEEALKNAEKGDFTFMDNLLEALKNPYSYSKDLEKYTKLPEKSDTPYVTYCGT</sequence>
<name>SELO_CLOPE</name>
<accession>Q06373</accession>
<gene>
    <name evidence="1" type="primary">ydiU</name>
    <name evidence="1" type="synonym">selO</name>
    <name type="ordered locus">CPE0035</name>
</gene>